<comment type="function">
    <text evidence="2 5 7">Mitochondrial inner membrane magnesium transporter required for mitochondrial magnesium homeostasis. Modulates the conductance of the MRS2 channel. Involved in the splicing of mRNA group II introns in mitochondria by affecting mitochondrial magnesium concentrations, which are critical for group II intron splicing.</text>
</comment>
<comment type="subunit">
    <text evidence="7">Forms homooligomers. Interacts with MRS2.</text>
</comment>
<comment type="interaction">
    <interactant intactId="EBI-33672">
        <id>Q02783</id>
    </interactant>
    <interactant intactId="EBI-11283">
        <id>Q01926</id>
        <label>MRS2</label>
    </interactant>
    <organismsDiffer>false</organismsDiffer>
    <experiments>3</experiments>
</comment>
<comment type="subcellular location">
    <subcellularLocation>
        <location evidence="2 3 6">Mitochondrion inner membrane</location>
        <topology evidence="2 3 6">Multi-pass membrane protein</topology>
    </subcellularLocation>
</comment>
<comment type="PTM">
    <text evidence="6">N-glycosylated. Glycosylation is important for correct localization of the protein.</text>
</comment>
<comment type="miscellaneous">
    <text evidence="4">Present with 396 molecules/cell in log phase SD medium.</text>
</comment>
<comment type="similarity">
    <text evidence="8">Belongs to the CorA metal ion transporter (MIT) (TC 1.A.35) family.</text>
</comment>
<sequence length="413" mass="47083">MRAFPRVLPFRHQRSYNNILLRTVRLFGSSLSSFDFSRQMPKVDPDNTAAMLLQKNLIQRNNMLYGYGSGTIRCTLLDSTGRAKSPLVEIKREDLVSKHGLLPRDLRKIEKSRKNDLVPSLLVRENSILISLLTVKALIKPDMVIIFDSAGSGITLNSEAHKDFINDMKLRLKNQETSELNSDPLPYEFRALETIFISALSNLTSEMKVLLTICKGVLQDLEFSITRDKLRFLLGQNKKLSSFNKKAVLVKDMLDDLLEQDDMLCDMYLTDKKAGKIRVQDDHTEIEMLLETYHNYVDEIVQKSESAISDVKTTEEIINIILDSNRNELMLLGIRYAIGMLSLGGALFLGSIYGMNLESFIEESNYAYLTVTILGLISTVWLYAKGIRHLHKLQRMTLLSKIKTDSVHELLKK</sequence>
<reference key="1">
    <citation type="journal article" date="1997" name="Nature">
        <title>The nucleotide sequence of Saccharomyces cerevisiae chromosome XVI.</title>
        <authorList>
            <person name="Bussey H."/>
            <person name="Storms R.K."/>
            <person name="Ahmed A."/>
            <person name="Albermann K."/>
            <person name="Allen E."/>
            <person name="Ansorge W."/>
            <person name="Araujo R."/>
            <person name="Aparicio A."/>
            <person name="Barrell B.G."/>
            <person name="Badcock K."/>
            <person name="Benes V."/>
            <person name="Botstein D."/>
            <person name="Bowman S."/>
            <person name="Brueckner M."/>
            <person name="Carpenter J."/>
            <person name="Cherry J.M."/>
            <person name="Chung E."/>
            <person name="Churcher C.M."/>
            <person name="Coster F."/>
            <person name="Davis K."/>
            <person name="Davis R.W."/>
            <person name="Dietrich F.S."/>
            <person name="Delius H."/>
            <person name="DiPaolo T."/>
            <person name="Dubois E."/>
            <person name="Duesterhoeft A."/>
            <person name="Duncan M."/>
            <person name="Floeth M."/>
            <person name="Fortin N."/>
            <person name="Friesen J.D."/>
            <person name="Fritz C."/>
            <person name="Goffeau A."/>
            <person name="Hall J."/>
            <person name="Hebling U."/>
            <person name="Heumann K."/>
            <person name="Hilbert H."/>
            <person name="Hillier L.W."/>
            <person name="Hunicke-Smith S."/>
            <person name="Hyman R.W."/>
            <person name="Johnston M."/>
            <person name="Kalman S."/>
            <person name="Kleine K."/>
            <person name="Komp C."/>
            <person name="Kurdi O."/>
            <person name="Lashkari D."/>
            <person name="Lew H."/>
            <person name="Lin A."/>
            <person name="Lin D."/>
            <person name="Louis E.J."/>
            <person name="Marathe R."/>
            <person name="Messenguy F."/>
            <person name="Mewes H.-W."/>
            <person name="Mirtipati S."/>
            <person name="Moestl D."/>
            <person name="Mueller-Auer S."/>
            <person name="Namath A."/>
            <person name="Nentwich U."/>
            <person name="Oefner P."/>
            <person name="Pearson D."/>
            <person name="Petel F.X."/>
            <person name="Pohl T.M."/>
            <person name="Purnelle B."/>
            <person name="Rajandream M.A."/>
            <person name="Rechmann S."/>
            <person name="Rieger M."/>
            <person name="Riles L."/>
            <person name="Roberts D."/>
            <person name="Schaefer M."/>
            <person name="Scharfe M."/>
            <person name="Scherens B."/>
            <person name="Schramm S."/>
            <person name="Schroeder M."/>
            <person name="Sdicu A.-M."/>
            <person name="Tettelin H."/>
            <person name="Urrestarazu L.A."/>
            <person name="Ushinsky S."/>
            <person name="Vierendeels F."/>
            <person name="Vissers S."/>
            <person name="Voss H."/>
            <person name="Walsh S.V."/>
            <person name="Wambutt R."/>
            <person name="Wang Y."/>
            <person name="Wedler E."/>
            <person name="Wedler H."/>
            <person name="Winnett E."/>
            <person name="Zhong W.-W."/>
            <person name="Zollner A."/>
            <person name="Vo D.H."/>
            <person name="Hani J."/>
        </authorList>
    </citation>
    <scope>NUCLEOTIDE SEQUENCE [LARGE SCALE GENOMIC DNA]</scope>
    <source>
        <strain>ATCC 204508 / S288c</strain>
    </source>
</reference>
<reference key="2">
    <citation type="journal article" date="2014" name="G3 (Bethesda)">
        <title>The reference genome sequence of Saccharomyces cerevisiae: Then and now.</title>
        <authorList>
            <person name="Engel S.R."/>
            <person name="Dietrich F.S."/>
            <person name="Fisk D.G."/>
            <person name="Binkley G."/>
            <person name="Balakrishnan R."/>
            <person name="Costanzo M.C."/>
            <person name="Dwight S.S."/>
            <person name="Hitz B.C."/>
            <person name="Karra K."/>
            <person name="Nash R.S."/>
            <person name="Weng S."/>
            <person name="Wong E.D."/>
            <person name="Lloyd P."/>
            <person name="Skrzypek M.S."/>
            <person name="Miyasato S.R."/>
            <person name="Simison M."/>
            <person name="Cherry J.M."/>
        </authorList>
    </citation>
    <scope>GENOME REANNOTATION</scope>
    <source>
        <strain>ATCC 204508 / S288c</strain>
    </source>
</reference>
<reference key="3">
    <citation type="journal article" date="2007" name="Genome Res.">
        <title>Approaching a complete repository of sequence-verified protein-encoding clones for Saccharomyces cerevisiae.</title>
        <authorList>
            <person name="Hu Y."/>
            <person name="Rolfs A."/>
            <person name="Bhullar B."/>
            <person name="Murthy T.V.S."/>
            <person name="Zhu C."/>
            <person name="Berger M.F."/>
            <person name="Camargo A.A."/>
            <person name="Kelley F."/>
            <person name="McCarron S."/>
            <person name="Jepson D."/>
            <person name="Richardson A."/>
            <person name="Raphael J."/>
            <person name="Moreira D."/>
            <person name="Taycher E."/>
            <person name="Zuo D."/>
            <person name="Mohr S."/>
            <person name="Kane M.F."/>
            <person name="Williamson J."/>
            <person name="Simpson A.J.G."/>
            <person name="Bulyk M.L."/>
            <person name="Harlow E."/>
            <person name="Marsischky G."/>
            <person name="Kolodner R.D."/>
            <person name="LaBaer J."/>
        </authorList>
    </citation>
    <scope>NUCLEOTIDE SEQUENCE [GENOMIC DNA]</scope>
    <source>
        <strain>ATCC 204508 / S288c</strain>
    </source>
</reference>
<reference key="4">
    <citation type="journal article" date="2001" name="Mol. Gen. Genet.">
        <title>The mitochondrial inner membrane protein Lpe10p, a homologue of Mrs2p, is essential for magnesium homeostasis and group II intron splicing in yeast.</title>
        <authorList>
            <person name="Gregan J."/>
            <person name="Bui D.M."/>
            <person name="Pillich R."/>
            <person name="Fink M."/>
            <person name="Zsurka G."/>
            <person name="Schweyen R.J."/>
        </authorList>
    </citation>
    <scope>FUNCTION</scope>
    <scope>SUBCELLULAR LOCATION</scope>
</reference>
<reference key="5">
    <citation type="journal article" date="2003" name="Nature">
        <title>Global analysis of protein localization in budding yeast.</title>
        <authorList>
            <person name="Huh W.-K."/>
            <person name="Falvo J.V."/>
            <person name="Gerke L.C."/>
            <person name="Carroll A.S."/>
            <person name="Howson R.W."/>
            <person name="Weissman J.S."/>
            <person name="O'Shea E.K."/>
        </authorList>
    </citation>
    <scope>SUBCELLULAR LOCATION [LARGE SCALE ANALYSIS]</scope>
</reference>
<reference key="6">
    <citation type="journal article" date="2003" name="Nature">
        <title>Global analysis of protein expression in yeast.</title>
        <authorList>
            <person name="Ghaemmaghami S."/>
            <person name="Huh W.-K."/>
            <person name="Bower K."/>
            <person name="Howson R.W."/>
            <person name="Belle A."/>
            <person name="Dephoure N."/>
            <person name="O'Shea E.K."/>
            <person name="Weissman J.S."/>
        </authorList>
    </citation>
    <scope>LEVEL OF PROTEIN EXPRESSION [LARGE SCALE ANALYSIS]</scope>
</reference>
<reference key="7">
    <citation type="journal article" date="2007" name="Biophys. J.">
        <title>Mrs2p forms a high conductance Mg2+ selective channel in mitochondria.</title>
        <authorList>
            <person name="Schindl R."/>
            <person name="Weghuber J."/>
            <person name="Romanin C."/>
            <person name="Schweyen R.J."/>
        </authorList>
    </citation>
    <scope>FUNCTION</scope>
</reference>
<reference key="8">
    <citation type="journal article" date="2009" name="Mol. Syst. Biol.">
        <title>Global analysis of the glycoproteome in Saccharomyces cerevisiae reveals new roles for protein glycosylation in eukaryotes.</title>
        <authorList>
            <person name="Kung L.A."/>
            <person name="Tao S.-C."/>
            <person name="Qian J."/>
            <person name="Smith M.G."/>
            <person name="Snyder M."/>
            <person name="Zhu H."/>
        </authorList>
    </citation>
    <scope>GLYCOSYLATION [LARGE SCALE ANALYSIS]</scope>
    <scope>SUBCELLULAR LOCATION</scope>
</reference>
<reference key="9">
    <citation type="journal article" date="2010" name="FEBS J.">
        <title>Lpe10p modulates the activity of the Mrs2p-based yeast mitochondrial Mg2+ channel.</title>
        <authorList>
            <person name="Sponder G."/>
            <person name="Svidova S."/>
            <person name="Schindl R."/>
            <person name="Wieser S."/>
            <person name="Schweyen R.J."/>
            <person name="Romanin C."/>
            <person name="Froschauer E.M."/>
            <person name="Weghuber J."/>
        </authorList>
    </citation>
    <scope>FUNCTION</scope>
    <scope>SUBUNIT</scope>
    <scope>INTERACTION WITH MRS2</scope>
</reference>
<organism>
    <name type="scientific">Saccharomyces cerevisiae (strain ATCC 204508 / S288c)</name>
    <name type="common">Baker's yeast</name>
    <dbReference type="NCBI Taxonomy" id="559292"/>
    <lineage>
        <taxon>Eukaryota</taxon>
        <taxon>Fungi</taxon>
        <taxon>Dikarya</taxon>
        <taxon>Ascomycota</taxon>
        <taxon>Saccharomycotina</taxon>
        <taxon>Saccharomycetes</taxon>
        <taxon>Saccharomycetales</taxon>
        <taxon>Saccharomycetaceae</taxon>
        <taxon>Saccharomyces</taxon>
    </lineage>
</organism>
<protein>
    <recommendedName>
        <fullName>Mitochondrial inner membrane magnesium transporter MFM1</fullName>
    </recommendedName>
    <alternativeName>
        <fullName>MRS2 function modulating factor 1</fullName>
    </alternativeName>
</protein>
<feature type="transit peptide" description="Mitochondrion" evidence="1">
    <location>
        <begin position="1"/>
        <end position="35"/>
    </location>
</feature>
<feature type="chain" id="PRO_0000042816" description="Mitochondrial inner membrane magnesium transporter MFM1">
    <location>
        <begin position="36"/>
        <end position="413"/>
    </location>
</feature>
<feature type="transmembrane region" description="Helical" evidence="1">
    <location>
        <begin position="329"/>
        <end position="349"/>
    </location>
</feature>
<feature type="transmembrane region" description="Helical" evidence="1">
    <location>
        <begin position="367"/>
        <end position="387"/>
    </location>
</feature>
<feature type="short sequence motif" description="YGMN">
    <location>
        <begin position="353"/>
        <end position="356"/>
    </location>
</feature>
<feature type="glycosylation site" description="N-linked (GlcNAc...) asparagine" evidence="1">
    <location>
        <position position="202"/>
    </location>
</feature>
<feature type="sequence conflict" description="In Ref. 3; AAT93188." evidence="8" ref="3">
    <original>M</original>
    <variation>V</variation>
    <location>
        <position position="267"/>
    </location>
</feature>
<dbReference type="EMBL" id="U39205">
    <property type="protein sequence ID" value="AAB68305.1"/>
    <property type="molecule type" value="Genomic_DNA"/>
</dbReference>
<dbReference type="EMBL" id="AY693169">
    <property type="protein sequence ID" value="AAT93188.1"/>
    <property type="molecule type" value="Genomic_DNA"/>
</dbReference>
<dbReference type="EMBL" id="BK006949">
    <property type="protein sequence ID" value="DAA11370.1"/>
    <property type="molecule type" value="Genomic_DNA"/>
</dbReference>
<dbReference type="PIR" id="S60930">
    <property type="entry name" value="S60930"/>
</dbReference>
<dbReference type="RefSeq" id="NP_015265.1">
    <property type="nucleotide sequence ID" value="NM_001183874.1"/>
</dbReference>
<dbReference type="SMR" id="Q02783"/>
<dbReference type="BioGRID" id="36118">
    <property type="interactions" value="140"/>
</dbReference>
<dbReference type="DIP" id="DIP-4653N"/>
<dbReference type="FunCoup" id="Q02783">
    <property type="interactions" value="390"/>
</dbReference>
<dbReference type="IntAct" id="Q02783">
    <property type="interactions" value="3"/>
</dbReference>
<dbReference type="MINT" id="Q02783"/>
<dbReference type="STRING" id="4932.YPL060W"/>
<dbReference type="TCDB" id="1.A.35.5.5">
    <property type="family name" value="the cora metal ion transporter (mit) family"/>
</dbReference>
<dbReference type="GlyCosmos" id="Q02783">
    <property type="glycosylation" value="1 site, No reported glycans"/>
</dbReference>
<dbReference type="GlyGen" id="Q02783">
    <property type="glycosylation" value="1 site"/>
</dbReference>
<dbReference type="PaxDb" id="4932-YPL060W"/>
<dbReference type="PeptideAtlas" id="Q02783"/>
<dbReference type="EnsemblFungi" id="YPL060W_mRNA">
    <property type="protein sequence ID" value="YPL060W"/>
    <property type="gene ID" value="YPL060W"/>
</dbReference>
<dbReference type="GeneID" id="856045"/>
<dbReference type="KEGG" id="sce:YPL060W"/>
<dbReference type="AGR" id="SGD:S000005981"/>
<dbReference type="SGD" id="S000005981">
    <property type="gene designation" value="MFM1"/>
</dbReference>
<dbReference type="VEuPathDB" id="FungiDB:YPL060W"/>
<dbReference type="eggNOG" id="KOG2662">
    <property type="taxonomic scope" value="Eukaryota"/>
</dbReference>
<dbReference type="GeneTree" id="ENSGT00390000009988"/>
<dbReference type="HOGENOM" id="CLU_025144_1_0_1"/>
<dbReference type="InParanoid" id="Q02783"/>
<dbReference type="OMA" id="TRNNCII"/>
<dbReference type="OrthoDB" id="10251508at2759"/>
<dbReference type="BioCyc" id="YEAST:G3O-33971-MONOMER"/>
<dbReference type="BRENDA" id="7.2.2.14">
    <property type="organism ID" value="984"/>
</dbReference>
<dbReference type="Reactome" id="R-SCE-5223345">
    <property type="pathway name" value="Miscellaneous transport and binding events"/>
</dbReference>
<dbReference type="BioGRID-ORCS" id="856045">
    <property type="hits" value="0 hits in 10 CRISPR screens"/>
</dbReference>
<dbReference type="PRO" id="PR:Q02783"/>
<dbReference type="Proteomes" id="UP000002311">
    <property type="component" value="Chromosome XVI"/>
</dbReference>
<dbReference type="RNAct" id="Q02783">
    <property type="molecule type" value="protein"/>
</dbReference>
<dbReference type="GO" id="GO:0005743">
    <property type="term" value="C:mitochondrial inner membrane"/>
    <property type="evidence" value="ECO:0000314"/>
    <property type="project" value="SGD"/>
</dbReference>
<dbReference type="GO" id="GO:0015095">
    <property type="term" value="F:magnesium ion transmembrane transporter activity"/>
    <property type="evidence" value="ECO:0000315"/>
    <property type="project" value="SGD"/>
</dbReference>
<dbReference type="GO" id="GO:0045016">
    <property type="term" value="P:mitochondrial magnesium ion transmembrane transport"/>
    <property type="evidence" value="ECO:0000315"/>
    <property type="project" value="SGD"/>
</dbReference>
<dbReference type="CDD" id="cd12823">
    <property type="entry name" value="Mrs2_Mfm1p-like"/>
    <property type="match status" value="1"/>
</dbReference>
<dbReference type="FunFam" id="1.20.58.340:FF:000005">
    <property type="entry name" value="Inner membrane magnesium transporter MRS2"/>
    <property type="match status" value="1"/>
</dbReference>
<dbReference type="FunFam" id="2.40.128.330:FF:000002">
    <property type="entry name" value="Inner membrane magnesium transporter mrs2"/>
    <property type="match status" value="1"/>
</dbReference>
<dbReference type="Gene3D" id="2.40.128.330">
    <property type="match status" value="1"/>
</dbReference>
<dbReference type="Gene3D" id="1.20.58.340">
    <property type="entry name" value="Magnesium transport protein CorA, transmembrane region"/>
    <property type="match status" value="1"/>
</dbReference>
<dbReference type="InterPro" id="IPR039204">
    <property type="entry name" value="MRS2-like"/>
</dbReference>
<dbReference type="PANTHER" id="PTHR13890:SF0">
    <property type="entry name" value="MAGNESIUM TRANSPORTER MRS2 HOMOLOG, MITOCHONDRIAL"/>
    <property type="match status" value="1"/>
</dbReference>
<dbReference type="PANTHER" id="PTHR13890">
    <property type="entry name" value="RNA SPLICING PROTEIN MRS2, MITOCHONDRIAL"/>
    <property type="match status" value="1"/>
</dbReference>
<dbReference type="Pfam" id="PF22099">
    <property type="entry name" value="MRS2-like"/>
    <property type="match status" value="1"/>
</dbReference>
<accession>Q02783</accession>
<accession>D6W3V4</accession>
<accession>Q6B1B1</accession>
<proteinExistence type="evidence at protein level"/>
<name>LPE10_YEAST</name>
<keyword id="KW-0325">Glycoprotein</keyword>
<keyword id="KW-0406">Ion transport</keyword>
<keyword id="KW-0460">Magnesium</keyword>
<keyword id="KW-0472">Membrane</keyword>
<keyword id="KW-0496">Mitochondrion</keyword>
<keyword id="KW-0999">Mitochondrion inner membrane</keyword>
<keyword id="KW-1185">Reference proteome</keyword>
<keyword id="KW-0809">Transit peptide</keyword>
<keyword id="KW-0812">Transmembrane</keyword>
<keyword id="KW-1133">Transmembrane helix</keyword>
<keyword id="KW-0813">Transport</keyword>
<evidence type="ECO:0000255" key="1"/>
<evidence type="ECO:0000269" key="2">
    <source>
    </source>
</evidence>
<evidence type="ECO:0000269" key="3">
    <source>
    </source>
</evidence>
<evidence type="ECO:0000269" key="4">
    <source>
    </source>
</evidence>
<evidence type="ECO:0000269" key="5">
    <source>
    </source>
</evidence>
<evidence type="ECO:0000269" key="6">
    <source>
    </source>
</evidence>
<evidence type="ECO:0000269" key="7">
    <source>
    </source>
</evidence>
<evidence type="ECO:0000305" key="8"/>
<gene>
    <name type="primary">MFM1</name>
    <name type="synonym">LPE10</name>
    <name type="ordered locus">YPL060W</name>
</gene>